<accession>A8GFF9</accession>
<name>FADR_SERP5</name>
<proteinExistence type="inferred from homology"/>
<evidence type="ECO:0000255" key="1">
    <source>
        <dbReference type="HAMAP-Rule" id="MF_00696"/>
    </source>
</evidence>
<dbReference type="EMBL" id="CP000826">
    <property type="protein sequence ID" value="ABV41849.1"/>
    <property type="molecule type" value="Genomic_DNA"/>
</dbReference>
<dbReference type="SMR" id="A8GFF9"/>
<dbReference type="STRING" id="399741.Spro_2748"/>
<dbReference type="KEGG" id="spe:Spro_2748"/>
<dbReference type="eggNOG" id="COG2186">
    <property type="taxonomic scope" value="Bacteria"/>
</dbReference>
<dbReference type="HOGENOM" id="CLU_017584_9_4_6"/>
<dbReference type="OrthoDB" id="5683977at2"/>
<dbReference type="GO" id="GO:0005737">
    <property type="term" value="C:cytoplasm"/>
    <property type="evidence" value="ECO:0007669"/>
    <property type="project" value="UniProtKB-SubCell"/>
</dbReference>
<dbReference type="GO" id="GO:0003677">
    <property type="term" value="F:DNA binding"/>
    <property type="evidence" value="ECO:0007669"/>
    <property type="project" value="UniProtKB-KW"/>
</dbReference>
<dbReference type="GO" id="GO:0003700">
    <property type="term" value="F:DNA-binding transcription factor activity"/>
    <property type="evidence" value="ECO:0007669"/>
    <property type="project" value="UniProtKB-UniRule"/>
</dbReference>
<dbReference type="GO" id="GO:0000062">
    <property type="term" value="F:fatty-acyl-CoA binding"/>
    <property type="evidence" value="ECO:0007669"/>
    <property type="project" value="InterPro"/>
</dbReference>
<dbReference type="GO" id="GO:0006631">
    <property type="term" value="P:fatty acid metabolic process"/>
    <property type="evidence" value="ECO:0007669"/>
    <property type="project" value="UniProtKB-KW"/>
</dbReference>
<dbReference type="GO" id="GO:0019217">
    <property type="term" value="P:regulation of fatty acid metabolic process"/>
    <property type="evidence" value="ECO:0007669"/>
    <property type="project" value="UniProtKB-UniRule"/>
</dbReference>
<dbReference type="CDD" id="cd07377">
    <property type="entry name" value="WHTH_GntR"/>
    <property type="match status" value="1"/>
</dbReference>
<dbReference type="FunFam" id="1.10.10.10:FF:000036">
    <property type="entry name" value="Fatty acid metabolism regulator protein"/>
    <property type="match status" value="1"/>
</dbReference>
<dbReference type="Gene3D" id="1.20.120.530">
    <property type="entry name" value="GntR ligand-binding domain-like"/>
    <property type="match status" value="1"/>
</dbReference>
<dbReference type="Gene3D" id="1.10.10.10">
    <property type="entry name" value="Winged helix-like DNA-binding domain superfamily/Winged helix DNA-binding domain"/>
    <property type="match status" value="1"/>
</dbReference>
<dbReference type="HAMAP" id="MF_00696">
    <property type="entry name" value="HTH_FadR"/>
    <property type="match status" value="1"/>
</dbReference>
<dbReference type="InterPro" id="IPR014178">
    <property type="entry name" value="FA-response_TF_FadR"/>
</dbReference>
<dbReference type="InterPro" id="IPR028374">
    <property type="entry name" value="FadR_C"/>
</dbReference>
<dbReference type="InterPro" id="IPR008920">
    <property type="entry name" value="TF_FadR/GntR_C"/>
</dbReference>
<dbReference type="InterPro" id="IPR000524">
    <property type="entry name" value="Tscrpt_reg_HTH_GntR"/>
</dbReference>
<dbReference type="InterPro" id="IPR036388">
    <property type="entry name" value="WH-like_DNA-bd_sf"/>
</dbReference>
<dbReference type="InterPro" id="IPR036390">
    <property type="entry name" value="WH_DNA-bd_sf"/>
</dbReference>
<dbReference type="NCBIfam" id="TIGR02812">
    <property type="entry name" value="fadR_gamma"/>
    <property type="match status" value="1"/>
</dbReference>
<dbReference type="NCBIfam" id="NF003444">
    <property type="entry name" value="PRK04984.1"/>
    <property type="match status" value="1"/>
</dbReference>
<dbReference type="PANTHER" id="PTHR43537:SF52">
    <property type="entry name" value="FATTY ACID METABOLISM REGULATOR PROTEIN"/>
    <property type="match status" value="1"/>
</dbReference>
<dbReference type="PANTHER" id="PTHR43537">
    <property type="entry name" value="TRANSCRIPTIONAL REGULATOR, GNTR FAMILY"/>
    <property type="match status" value="1"/>
</dbReference>
<dbReference type="Pfam" id="PF07840">
    <property type="entry name" value="FadR_C"/>
    <property type="match status" value="1"/>
</dbReference>
<dbReference type="Pfam" id="PF00392">
    <property type="entry name" value="GntR"/>
    <property type="match status" value="1"/>
</dbReference>
<dbReference type="PRINTS" id="PR00035">
    <property type="entry name" value="HTHGNTR"/>
</dbReference>
<dbReference type="SMART" id="SM00345">
    <property type="entry name" value="HTH_GNTR"/>
    <property type="match status" value="1"/>
</dbReference>
<dbReference type="SUPFAM" id="SSF48008">
    <property type="entry name" value="GntR ligand-binding domain-like"/>
    <property type="match status" value="1"/>
</dbReference>
<dbReference type="SUPFAM" id="SSF46785">
    <property type="entry name" value="Winged helix' DNA-binding domain"/>
    <property type="match status" value="1"/>
</dbReference>
<dbReference type="PROSITE" id="PS50949">
    <property type="entry name" value="HTH_GNTR"/>
    <property type="match status" value="1"/>
</dbReference>
<gene>
    <name evidence="1" type="primary">fadR</name>
    <name type="ordered locus">Spro_2748</name>
</gene>
<organism>
    <name type="scientific">Serratia proteamaculans (strain 568)</name>
    <dbReference type="NCBI Taxonomy" id="399741"/>
    <lineage>
        <taxon>Bacteria</taxon>
        <taxon>Pseudomonadati</taxon>
        <taxon>Pseudomonadota</taxon>
        <taxon>Gammaproteobacteria</taxon>
        <taxon>Enterobacterales</taxon>
        <taxon>Yersiniaceae</taxon>
        <taxon>Serratia</taxon>
    </lineage>
</organism>
<keyword id="KW-0010">Activator</keyword>
<keyword id="KW-0963">Cytoplasm</keyword>
<keyword id="KW-0238">DNA-binding</keyword>
<keyword id="KW-0276">Fatty acid metabolism</keyword>
<keyword id="KW-0443">Lipid metabolism</keyword>
<keyword id="KW-0678">Repressor</keyword>
<keyword id="KW-0804">Transcription</keyword>
<keyword id="KW-0805">Transcription regulation</keyword>
<reference key="1">
    <citation type="submission" date="2007-09" db="EMBL/GenBank/DDBJ databases">
        <title>Complete sequence of chromosome of Serratia proteamaculans 568.</title>
        <authorList>
            <consortium name="US DOE Joint Genome Institute"/>
            <person name="Copeland A."/>
            <person name="Lucas S."/>
            <person name="Lapidus A."/>
            <person name="Barry K."/>
            <person name="Glavina del Rio T."/>
            <person name="Dalin E."/>
            <person name="Tice H."/>
            <person name="Pitluck S."/>
            <person name="Chain P."/>
            <person name="Malfatti S."/>
            <person name="Shin M."/>
            <person name="Vergez L."/>
            <person name="Schmutz J."/>
            <person name="Larimer F."/>
            <person name="Land M."/>
            <person name="Hauser L."/>
            <person name="Kyrpides N."/>
            <person name="Kim E."/>
            <person name="Taghavi S."/>
            <person name="Newman L."/>
            <person name="Vangronsveld J."/>
            <person name="van der Lelie D."/>
            <person name="Richardson P."/>
        </authorList>
    </citation>
    <scope>NUCLEOTIDE SEQUENCE [LARGE SCALE GENOMIC DNA]</scope>
    <source>
        <strain>568</strain>
    </source>
</reference>
<comment type="function">
    <text evidence="1">Multifunctional regulator of fatty acid metabolism.</text>
</comment>
<comment type="subunit">
    <text evidence="1">Homodimer.</text>
</comment>
<comment type="subcellular location">
    <subcellularLocation>
        <location evidence="1">Cytoplasm</location>
    </subcellularLocation>
</comment>
<protein>
    <recommendedName>
        <fullName evidence="1">Fatty acid metabolism regulator protein</fullName>
    </recommendedName>
</protein>
<feature type="chain" id="PRO_1000062058" description="Fatty acid metabolism regulator protein">
    <location>
        <begin position="1"/>
        <end position="239"/>
    </location>
</feature>
<feature type="domain" description="HTH gntR-type" evidence="1">
    <location>
        <begin position="6"/>
        <end position="74"/>
    </location>
</feature>
<feature type="DNA-binding region" description="H-T-H motif" evidence="1">
    <location>
        <begin position="34"/>
        <end position="53"/>
    </location>
</feature>
<sequence>MVIKAQSPAGFAEEYIIESIWNNRFPPGTILPAERELSELIGVTRTTLREVLQRLARDGWLTIQHGKPTKVNNFWETSGLNILETVARLDHQSVPQLIDNLLSVRTNIAAIFIRAAVRNHPEAAQEVLAKATQVEDQADAFNLLDYEIFRGLAFASGNPIYGLIFNGLKGLYTRVGRYYFSNPESRKLALTFYSKLSTLCHEKSYDQVMDCVRNYGKDSGAIWQSMQGTMPSDLTEARR</sequence>